<evidence type="ECO:0000250" key="1"/>
<evidence type="ECO:0000250" key="2">
    <source>
        <dbReference type="UniProtKB" id="P49908"/>
    </source>
</evidence>
<evidence type="ECO:0000255" key="3"/>
<evidence type="ECO:0000256" key="4">
    <source>
        <dbReference type="SAM" id="MobiDB-lite"/>
    </source>
</evidence>
<evidence type="ECO:0000269" key="5">
    <source>
    </source>
</evidence>
<evidence type="ECO:0000269" key="6">
    <source>
    </source>
</evidence>
<evidence type="ECO:0000303" key="7">
    <source>
    </source>
</evidence>
<evidence type="ECO:0000305" key="8"/>
<evidence type="ECO:0000312" key="9">
    <source>
        <dbReference type="MGI" id="MGI:894288"/>
    </source>
</evidence>
<reference key="1">
    <citation type="journal article" date="1997" name="BioFactors">
        <title>cDNA and deduced polypeptide sequence of a mouse selenoprotein P.</title>
        <authorList>
            <person name="Steinert P."/>
            <person name="Ahrens M."/>
            <person name="Gross G."/>
            <person name="Flohe L."/>
        </authorList>
    </citation>
    <scope>NUCLEOTIDE SEQUENCE [MRNA]</scope>
    <source>
        <strain>Swiss Webster / NIH</strain>
    </source>
</reference>
<reference key="2">
    <citation type="submission" date="2010-12" db="EMBL/GenBank/DDBJ databases">
        <authorList>
            <person name="Steinert P."/>
        </authorList>
    </citation>
    <scope>SEQUENCE REVISION TO 59; 259; 277; 318; 330; 352; 366; 368; 375 AND 377</scope>
</reference>
<reference key="3">
    <citation type="journal article" date="1998" name="Biol. Chem.">
        <title>Analysis of the mouse selenoprotein P gene.</title>
        <authorList>
            <person name="Steinert P."/>
            <person name="Bachner D."/>
            <person name="Flohe L."/>
        </authorList>
    </citation>
    <scope>NUCLEOTIDE SEQUENCE [GENOMIC DNA]</scope>
    <scope>TISSUE SPECIFICITY</scope>
    <source>
        <strain>129</strain>
    </source>
</reference>
<reference key="4">
    <citation type="journal article" date="2005" name="Science">
        <title>The transcriptional landscape of the mammalian genome.</title>
        <authorList>
            <person name="Carninci P."/>
            <person name="Kasukawa T."/>
            <person name="Katayama S."/>
            <person name="Gough J."/>
            <person name="Frith M.C."/>
            <person name="Maeda N."/>
            <person name="Oyama R."/>
            <person name="Ravasi T."/>
            <person name="Lenhard B."/>
            <person name="Wells C."/>
            <person name="Kodzius R."/>
            <person name="Shimokawa K."/>
            <person name="Bajic V.B."/>
            <person name="Brenner S.E."/>
            <person name="Batalov S."/>
            <person name="Forrest A.R."/>
            <person name="Zavolan M."/>
            <person name="Davis M.J."/>
            <person name="Wilming L.G."/>
            <person name="Aidinis V."/>
            <person name="Allen J.E."/>
            <person name="Ambesi-Impiombato A."/>
            <person name="Apweiler R."/>
            <person name="Aturaliya R.N."/>
            <person name="Bailey T.L."/>
            <person name="Bansal M."/>
            <person name="Baxter L."/>
            <person name="Beisel K.W."/>
            <person name="Bersano T."/>
            <person name="Bono H."/>
            <person name="Chalk A.M."/>
            <person name="Chiu K.P."/>
            <person name="Choudhary V."/>
            <person name="Christoffels A."/>
            <person name="Clutterbuck D.R."/>
            <person name="Crowe M.L."/>
            <person name="Dalla E."/>
            <person name="Dalrymple B.P."/>
            <person name="de Bono B."/>
            <person name="Della Gatta G."/>
            <person name="di Bernardo D."/>
            <person name="Down T."/>
            <person name="Engstrom P."/>
            <person name="Fagiolini M."/>
            <person name="Faulkner G."/>
            <person name="Fletcher C.F."/>
            <person name="Fukushima T."/>
            <person name="Furuno M."/>
            <person name="Futaki S."/>
            <person name="Gariboldi M."/>
            <person name="Georgii-Hemming P."/>
            <person name="Gingeras T.R."/>
            <person name="Gojobori T."/>
            <person name="Green R.E."/>
            <person name="Gustincich S."/>
            <person name="Harbers M."/>
            <person name="Hayashi Y."/>
            <person name="Hensch T.K."/>
            <person name="Hirokawa N."/>
            <person name="Hill D."/>
            <person name="Huminiecki L."/>
            <person name="Iacono M."/>
            <person name="Ikeo K."/>
            <person name="Iwama A."/>
            <person name="Ishikawa T."/>
            <person name="Jakt M."/>
            <person name="Kanapin A."/>
            <person name="Katoh M."/>
            <person name="Kawasawa Y."/>
            <person name="Kelso J."/>
            <person name="Kitamura H."/>
            <person name="Kitano H."/>
            <person name="Kollias G."/>
            <person name="Krishnan S.P."/>
            <person name="Kruger A."/>
            <person name="Kummerfeld S.K."/>
            <person name="Kurochkin I.V."/>
            <person name="Lareau L.F."/>
            <person name="Lazarevic D."/>
            <person name="Lipovich L."/>
            <person name="Liu J."/>
            <person name="Liuni S."/>
            <person name="McWilliam S."/>
            <person name="Madan Babu M."/>
            <person name="Madera M."/>
            <person name="Marchionni L."/>
            <person name="Matsuda H."/>
            <person name="Matsuzawa S."/>
            <person name="Miki H."/>
            <person name="Mignone F."/>
            <person name="Miyake S."/>
            <person name="Morris K."/>
            <person name="Mottagui-Tabar S."/>
            <person name="Mulder N."/>
            <person name="Nakano N."/>
            <person name="Nakauchi H."/>
            <person name="Ng P."/>
            <person name="Nilsson R."/>
            <person name="Nishiguchi S."/>
            <person name="Nishikawa S."/>
            <person name="Nori F."/>
            <person name="Ohara O."/>
            <person name="Okazaki Y."/>
            <person name="Orlando V."/>
            <person name="Pang K.C."/>
            <person name="Pavan W.J."/>
            <person name="Pavesi G."/>
            <person name="Pesole G."/>
            <person name="Petrovsky N."/>
            <person name="Piazza S."/>
            <person name="Reed J."/>
            <person name="Reid J.F."/>
            <person name="Ring B.Z."/>
            <person name="Ringwald M."/>
            <person name="Rost B."/>
            <person name="Ruan Y."/>
            <person name="Salzberg S.L."/>
            <person name="Sandelin A."/>
            <person name="Schneider C."/>
            <person name="Schoenbach C."/>
            <person name="Sekiguchi K."/>
            <person name="Semple C.A."/>
            <person name="Seno S."/>
            <person name="Sessa L."/>
            <person name="Sheng Y."/>
            <person name="Shibata Y."/>
            <person name="Shimada H."/>
            <person name="Shimada K."/>
            <person name="Silva D."/>
            <person name="Sinclair B."/>
            <person name="Sperling S."/>
            <person name="Stupka E."/>
            <person name="Sugiura K."/>
            <person name="Sultana R."/>
            <person name="Takenaka Y."/>
            <person name="Taki K."/>
            <person name="Tammoja K."/>
            <person name="Tan S.L."/>
            <person name="Tang S."/>
            <person name="Taylor M.S."/>
            <person name="Tegner J."/>
            <person name="Teichmann S.A."/>
            <person name="Ueda H.R."/>
            <person name="van Nimwegen E."/>
            <person name="Verardo R."/>
            <person name="Wei C.L."/>
            <person name="Yagi K."/>
            <person name="Yamanishi H."/>
            <person name="Zabarovsky E."/>
            <person name="Zhu S."/>
            <person name="Zimmer A."/>
            <person name="Hide W."/>
            <person name="Bult C."/>
            <person name="Grimmond S.M."/>
            <person name="Teasdale R.D."/>
            <person name="Liu E.T."/>
            <person name="Brusic V."/>
            <person name="Quackenbush J."/>
            <person name="Wahlestedt C."/>
            <person name="Mattick J.S."/>
            <person name="Hume D.A."/>
            <person name="Kai C."/>
            <person name="Sasaki D."/>
            <person name="Tomaru Y."/>
            <person name="Fukuda S."/>
            <person name="Kanamori-Katayama M."/>
            <person name="Suzuki M."/>
            <person name="Aoki J."/>
            <person name="Arakawa T."/>
            <person name="Iida J."/>
            <person name="Imamura K."/>
            <person name="Itoh M."/>
            <person name="Kato T."/>
            <person name="Kawaji H."/>
            <person name="Kawagashira N."/>
            <person name="Kawashima T."/>
            <person name="Kojima M."/>
            <person name="Kondo S."/>
            <person name="Konno H."/>
            <person name="Nakano K."/>
            <person name="Ninomiya N."/>
            <person name="Nishio T."/>
            <person name="Okada M."/>
            <person name="Plessy C."/>
            <person name="Shibata K."/>
            <person name="Shiraki T."/>
            <person name="Suzuki S."/>
            <person name="Tagami M."/>
            <person name="Waki K."/>
            <person name="Watahiki A."/>
            <person name="Okamura-Oho Y."/>
            <person name="Suzuki H."/>
            <person name="Kawai J."/>
            <person name="Hayashizaki Y."/>
        </authorList>
    </citation>
    <scope>NUCLEOTIDE SEQUENCE [LARGE SCALE MRNA]</scope>
    <source>
        <strain>C57BL/6J</strain>
        <tissue>Amnion</tissue>
        <tissue>Kidney</tissue>
        <tissue>Placenta</tissue>
    </source>
</reference>
<reference key="5">
    <citation type="journal article" date="2004" name="Genome Res.">
        <title>The status, quality, and expansion of the NIH full-length cDNA project: the Mammalian Gene Collection (MGC).</title>
        <authorList>
            <consortium name="The MGC Project Team"/>
        </authorList>
    </citation>
    <scope>NUCLEOTIDE SEQUENCE [LARGE SCALE MRNA]</scope>
    <source>
        <strain>FVB/N</strain>
        <tissue>Mammary tumor</tissue>
    </source>
</reference>
<reference key="6">
    <citation type="journal article" date="2008" name="J. Biol. Chem.">
        <title>Megalin mediates selenoprotein P uptake by kidney proximal tubule epithelial cells.</title>
        <authorList>
            <person name="Olson G.E."/>
            <person name="Winfrey V.P."/>
            <person name="Hill K.E."/>
            <person name="Burk R.F."/>
        </authorList>
    </citation>
    <scope>SUBCELLULAR LOCATION</scope>
    <scope>TISSUE SPECIFICITY</scope>
    <scope>DOMAIN</scope>
</reference>
<reference key="7">
    <citation type="journal article" date="2010" name="Cell">
        <title>A tissue-specific atlas of mouse protein phosphorylation and expression.</title>
        <authorList>
            <person name="Huttlin E.L."/>
            <person name="Jedrychowski M.P."/>
            <person name="Elias J.E."/>
            <person name="Goswami T."/>
            <person name="Rad R."/>
            <person name="Beausoleil S.A."/>
            <person name="Villen J."/>
            <person name="Haas W."/>
            <person name="Sowa M.E."/>
            <person name="Gygi S.P."/>
        </authorList>
    </citation>
    <scope>IDENTIFICATION BY MASS SPECTROMETRY [LARGE SCALE ANALYSIS]</scope>
    <source>
        <tissue>Lung</tissue>
        <tissue>Spleen</tissue>
        <tissue>Testis</tissue>
    </source>
</reference>
<protein>
    <recommendedName>
        <fullName evidence="7">Selenoprotein P</fullName>
        <shortName>SeP</shortName>
    </recommendedName>
    <alternativeName>
        <fullName>Plasma selenoprotein P</fullName>
    </alternativeName>
</protein>
<name>SEPP1_MOUSE</name>
<organism>
    <name type="scientific">Mus musculus</name>
    <name type="common">Mouse</name>
    <dbReference type="NCBI Taxonomy" id="10090"/>
    <lineage>
        <taxon>Eukaryota</taxon>
        <taxon>Metazoa</taxon>
        <taxon>Chordata</taxon>
        <taxon>Craniata</taxon>
        <taxon>Vertebrata</taxon>
        <taxon>Euteleostomi</taxon>
        <taxon>Mammalia</taxon>
        <taxon>Eutheria</taxon>
        <taxon>Euarchontoglires</taxon>
        <taxon>Glires</taxon>
        <taxon>Rodentia</taxon>
        <taxon>Myomorpha</taxon>
        <taxon>Muroidea</taxon>
        <taxon>Muridae</taxon>
        <taxon>Murinae</taxon>
        <taxon>Mus</taxon>
        <taxon>Mus</taxon>
    </lineage>
</organism>
<accession>P70274</accession>
<accession>Q3TJ31</accession>
<accession>Q3TXG8</accession>
<accession>Q6PKE7</accession>
<accession>Q80T08</accession>
<accession>Q80UF3</accession>
<accession>Q9Z2T7</accession>
<keyword id="KW-0325">Glycoprotein</keyword>
<keyword id="KW-0597">Phosphoprotein</keyword>
<keyword id="KW-1185">Reference proteome</keyword>
<keyword id="KW-0964">Secreted</keyword>
<keyword id="KW-0711">Selenium</keyword>
<keyword id="KW-0712">Selenocysteine</keyword>
<keyword id="KW-0732">Signal</keyword>
<feature type="signal peptide" evidence="1">
    <location>
        <begin position="1"/>
        <end position="19"/>
    </location>
</feature>
<feature type="chain" id="PRO_0000022314" description="Selenoprotein P">
    <location>
        <begin position="20"/>
        <end position="380"/>
    </location>
</feature>
<feature type="region of interest" description="Disordered" evidence="4">
    <location>
        <begin position="196"/>
        <end position="257"/>
    </location>
</feature>
<feature type="region of interest" description="Disordered" evidence="4">
    <location>
        <begin position="346"/>
        <end position="380"/>
    </location>
</feature>
<feature type="compositionally biased region" description="Polar residues" evidence="4">
    <location>
        <begin position="221"/>
        <end position="237"/>
    </location>
</feature>
<feature type="compositionally biased region" description="Basic residues" evidence="4">
    <location>
        <begin position="241"/>
        <end position="253"/>
    </location>
</feature>
<feature type="compositionally biased region" description="Low complexity" evidence="4">
    <location>
        <begin position="348"/>
        <end position="360"/>
    </location>
</feature>
<feature type="non-standard amino acid" description="Selenocysteine">
    <location>
        <position position="59"/>
    </location>
</feature>
<feature type="non-standard amino acid" description="Selenocysteine">
    <location>
        <position position="259"/>
    </location>
</feature>
<feature type="non-standard amino acid" description="Selenocysteine">
    <location>
        <position position="277"/>
    </location>
</feature>
<feature type="non-standard amino acid" description="Selenocysteine">
    <location>
        <position position="318"/>
    </location>
</feature>
<feature type="non-standard amino acid" description="Selenocysteine">
    <location>
        <position position="330"/>
    </location>
</feature>
<feature type="non-standard amino acid" description="Selenocysteine">
    <location>
        <position position="352"/>
    </location>
</feature>
<feature type="non-standard amino acid" description="Selenocysteine">
    <location>
        <position position="366"/>
    </location>
</feature>
<feature type="non-standard amino acid" description="Selenocysteine">
    <location>
        <position position="368"/>
    </location>
</feature>
<feature type="non-standard amino acid" description="Selenocysteine">
    <location>
        <position position="375"/>
    </location>
</feature>
<feature type="non-standard amino acid" description="Selenocysteine">
    <location>
        <position position="377"/>
    </location>
</feature>
<feature type="modified residue" description="Phosphoserine" evidence="2">
    <location>
        <position position="264"/>
    </location>
</feature>
<feature type="glycosylation site" description="N-linked (GlcNAc...) asparagine" evidence="1">
    <location>
        <position position="83"/>
    </location>
</feature>
<feature type="glycosylation site" description="N-linked (GlcNAc...) asparagine" evidence="3">
    <location>
        <position position="176"/>
    </location>
</feature>
<feature type="glycosylation site" description="N-linked (GlcNAc...) asparagine" evidence="3">
    <location>
        <position position="195"/>
    </location>
</feature>
<feature type="glycosylation site" description="N-linked (GlcNAc...) asparagine" evidence="3">
    <location>
        <position position="365"/>
    </location>
</feature>
<feature type="glycosylation site" description="N-linked (GlcNAc...) asparagine" evidence="3">
    <location>
        <position position="370"/>
    </location>
</feature>
<feature type="sequence conflict" description="In Ref. 3; BAC55264." evidence="8" ref="3">
    <original>D</original>
    <variation>Y</variation>
    <location>
        <position position="184"/>
    </location>
</feature>
<feature type="sequence conflict" description="In Ref. 2; AAD01684 and 4; AAH01991." evidence="8" ref="2 4">
    <original>T</original>
    <variation>N</variation>
    <location>
        <position position="188"/>
    </location>
</feature>
<feature type="sequence conflict" description="In Ref. 2; AAD01684." evidence="8" ref="2">
    <original>A</original>
    <variation>V</variation>
    <location>
        <position position="192"/>
    </location>
</feature>
<feature type="sequence conflict" description="In Ref. 2; AAD01684." evidence="8" ref="2">
    <original>A</original>
    <variation>V</variation>
    <location>
        <position position="203"/>
    </location>
</feature>
<feature type="sequence conflict" description="In Ref. 3; BAE34948." evidence="8" ref="3">
    <original>S</original>
    <variation>R</variation>
    <location>
        <position position="264"/>
    </location>
</feature>
<feature type="sequence conflict" description="In Ref. 3; BAC55264." evidence="8" ref="3">
    <original>I</original>
    <variation>V</variation>
    <location>
        <position position="308"/>
    </location>
</feature>
<feature type="sequence conflict" description="In Ref. 4; AAH01991." evidence="8" ref="4">
    <original>A</original>
    <variation>C</variation>
    <location>
        <position position="321"/>
    </location>
</feature>
<sequence>MWRSLGLALALCLLPYGGAESQGQSSACYKAPEWYIGDQNPMLNSEGKVTVVALLQASUYLCLLQASRLEDLRIKLESQGYFNISYIVVNHQGSPSQLKHSHLKKQVSEHIAVYRQEEDGIDVWTLLNGNKDDFLIYDRCGRLVYHLGLPYSFLTFPYVEEAIKIAYCEERCGNCNLTSLEDEDFCKTVTSATANKTAEPSEAHSHHKHHNKHGQEHLGSSKPSENQQPGPSETTLPPSGLHHHHRHRGQHRQGHLESUDTTASEGLHLSLAQRKLURRGCINQLLCKLSKESEAAPSSCCCHCRHLIFEKSGSAIAUQCAENLPSLCSUQGLFAEEKVTESCQCRSPPAAUQNQPMNPMEANPNUSUDNQTRKUKUHSN</sequence>
<dbReference type="EMBL" id="X99807">
    <property type="protein sequence ID" value="CAA68140.2"/>
    <property type="molecule type" value="mRNA"/>
</dbReference>
<dbReference type="EMBL" id="AF021345">
    <property type="protein sequence ID" value="AAD01684.1"/>
    <property type="molecule type" value="Genomic_DNA"/>
</dbReference>
<dbReference type="EMBL" id="AK002450">
    <property type="protein sequence ID" value="BAC55246.3"/>
    <property type="molecule type" value="mRNA"/>
</dbReference>
<dbReference type="EMBL" id="AK077265">
    <property type="protein sequence ID" value="BAC55264.3"/>
    <property type="molecule type" value="mRNA"/>
</dbReference>
<dbReference type="EMBL" id="AK146774">
    <property type="protein sequence ID" value="BAE27423.1"/>
    <property type="molecule type" value="mRNA"/>
</dbReference>
<dbReference type="EMBL" id="AK148623">
    <property type="protein sequence ID" value="BAE28626.1"/>
    <property type="molecule type" value="mRNA"/>
</dbReference>
<dbReference type="EMBL" id="AK159269">
    <property type="protein sequence ID" value="BAE34948.1"/>
    <property type="molecule type" value="mRNA"/>
</dbReference>
<dbReference type="EMBL" id="AK159524">
    <property type="protein sequence ID" value="BAE35153.1"/>
    <property type="molecule type" value="mRNA"/>
</dbReference>
<dbReference type="EMBL" id="AK159894">
    <property type="protein sequence ID" value="BAE35460.1"/>
    <property type="molecule type" value="mRNA"/>
</dbReference>
<dbReference type="EMBL" id="AK159911">
    <property type="protein sequence ID" value="BAE35474.1"/>
    <property type="molecule type" value="mRNA"/>
</dbReference>
<dbReference type="EMBL" id="AK159935">
    <property type="protein sequence ID" value="BAE35495.1"/>
    <property type="molecule type" value="mRNA"/>
</dbReference>
<dbReference type="EMBL" id="AK167611">
    <property type="protein sequence ID" value="BAE39664.1"/>
    <property type="molecule type" value="mRNA"/>
</dbReference>
<dbReference type="EMBL" id="AK168463">
    <property type="protein sequence ID" value="BAE40359.1"/>
    <property type="molecule type" value="mRNA"/>
</dbReference>
<dbReference type="EMBL" id="AK168583">
    <property type="protein sequence ID" value="BAE40452.1"/>
    <property type="molecule type" value="mRNA"/>
</dbReference>
<dbReference type="EMBL" id="AK168631">
    <property type="protein sequence ID" value="BAE40491.1"/>
    <property type="molecule type" value="mRNA"/>
</dbReference>
<dbReference type="EMBL" id="AK168747">
    <property type="protein sequence ID" value="BAE40587.1"/>
    <property type="molecule type" value="mRNA"/>
</dbReference>
<dbReference type="EMBL" id="AK168926">
    <property type="protein sequence ID" value="BAE40739.1"/>
    <property type="molecule type" value="mRNA"/>
</dbReference>
<dbReference type="EMBL" id="AK169011">
    <property type="protein sequence ID" value="BAE40808.1"/>
    <property type="molecule type" value="mRNA"/>
</dbReference>
<dbReference type="EMBL" id="AK169158">
    <property type="protein sequence ID" value="BAE40937.1"/>
    <property type="molecule type" value="mRNA"/>
</dbReference>
<dbReference type="EMBL" id="AK169362">
    <property type="protein sequence ID" value="BAE41111.1"/>
    <property type="molecule type" value="mRNA"/>
</dbReference>
<dbReference type="EMBL" id="BC001991">
    <property type="protein sequence ID" value="AAH01991.2"/>
    <property type="molecule type" value="mRNA"/>
</dbReference>
<dbReference type="CCDS" id="CCDS27357.1"/>
<dbReference type="PIR" id="T10442">
    <property type="entry name" value="T10442"/>
</dbReference>
<dbReference type="RefSeq" id="NP_001036078.1">
    <property type="nucleotide sequence ID" value="NM_001042613.2"/>
</dbReference>
<dbReference type="RefSeq" id="NP_001036079.1">
    <property type="nucleotide sequence ID" value="NM_001042614.2"/>
</dbReference>
<dbReference type="RefSeq" id="NP_033181.3">
    <property type="nucleotide sequence ID" value="NM_009155.4"/>
</dbReference>
<dbReference type="BioGRID" id="203178">
    <property type="interactions" value="7"/>
</dbReference>
<dbReference type="FunCoup" id="P70274">
    <property type="interactions" value="347"/>
</dbReference>
<dbReference type="STRING" id="10090.ENSMUSP00000124305"/>
<dbReference type="TCDB" id="9.B.88.1.1">
    <property type="family name" value="the putative selenoprotein p hydrogen selenide uptake protein (selp) family"/>
</dbReference>
<dbReference type="GlyCosmos" id="P70274">
    <property type="glycosylation" value="5 sites, No reported glycans"/>
</dbReference>
<dbReference type="GlyGen" id="P70274">
    <property type="glycosylation" value="5 sites, 2 N-linked glycans (2 sites)"/>
</dbReference>
<dbReference type="PhosphoSitePlus" id="P70274"/>
<dbReference type="SwissPalm" id="P70274"/>
<dbReference type="CPTAC" id="non-CPTAC-3746"/>
<dbReference type="PaxDb" id="10090-ENSMUSP00000124305"/>
<dbReference type="PeptideAtlas" id="P70274"/>
<dbReference type="ProteomicsDB" id="256962"/>
<dbReference type="Antibodypedia" id="43718">
    <property type="antibodies" value="163 antibodies from 22 providers"/>
</dbReference>
<dbReference type="DNASU" id="20363"/>
<dbReference type="Ensembl" id="ENSMUST00000082424.12">
    <property type="protein sequence ID" value="ENSMUSP00000081004.6"/>
    <property type="gene ID" value="ENSMUSG00000064373.14"/>
</dbReference>
<dbReference type="Ensembl" id="ENSMUST00000159216.10">
    <property type="protein sequence ID" value="ENSMUSP00000124305.3"/>
    <property type="gene ID" value="ENSMUSG00000064373.14"/>
</dbReference>
<dbReference type="GeneID" id="20363"/>
<dbReference type="KEGG" id="mmu:20363"/>
<dbReference type="UCSC" id="uc007vby.1">
    <property type="organism name" value="mouse"/>
</dbReference>
<dbReference type="AGR" id="MGI:894288"/>
<dbReference type="CTD" id="6414"/>
<dbReference type="MGI" id="MGI:894288">
    <property type="gene designation" value="Selenop"/>
</dbReference>
<dbReference type="VEuPathDB" id="HostDB:ENSMUSG00000064373"/>
<dbReference type="eggNOG" id="ENOG502QWRU">
    <property type="taxonomic scope" value="Eukaryota"/>
</dbReference>
<dbReference type="GeneTree" id="ENSGT00510000049326"/>
<dbReference type="HOGENOM" id="CLU_064314_1_0_1"/>
<dbReference type="InParanoid" id="P70274"/>
<dbReference type="OMA" id="XQASQQL"/>
<dbReference type="OrthoDB" id="6134775at2759"/>
<dbReference type="PhylomeDB" id="P70274"/>
<dbReference type="TreeFam" id="TF333425"/>
<dbReference type="Reactome" id="R-MMU-114608">
    <property type="pathway name" value="Platelet degranulation"/>
</dbReference>
<dbReference type="BioGRID-ORCS" id="20363">
    <property type="hits" value="5 hits in 78 CRISPR screens"/>
</dbReference>
<dbReference type="ChiTaRS" id="Sepp1">
    <property type="organism name" value="mouse"/>
</dbReference>
<dbReference type="PRO" id="PR:P70274"/>
<dbReference type="Proteomes" id="UP000000589">
    <property type="component" value="Chromosome 15"/>
</dbReference>
<dbReference type="RNAct" id="P70274">
    <property type="molecule type" value="protein"/>
</dbReference>
<dbReference type="Bgee" id="ENSMUSG00000064373">
    <property type="expression patterns" value="Expressed in stroma of bone marrow and 259 other cell types or tissues"/>
</dbReference>
<dbReference type="ExpressionAtlas" id="P70274">
    <property type="expression patterns" value="baseline and differential"/>
</dbReference>
<dbReference type="GO" id="GO:0005576">
    <property type="term" value="C:extracellular region"/>
    <property type="evidence" value="ECO:0000304"/>
    <property type="project" value="MGI"/>
</dbReference>
<dbReference type="GO" id="GO:0005615">
    <property type="term" value="C:extracellular space"/>
    <property type="evidence" value="ECO:0000314"/>
    <property type="project" value="MGI"/>
</dbReference>
<dbReference type="GO" id="GO:0008430">
    <property type="term" value="F:selenium binding"/>
    <property type="evidence" value="ECO:0000314"/>
    <property type="project" value="MGI"/>
</dbReference>
<dbReference type="GO" id="GO:0007420">
    <property type="term" value="P:brain development"/>
    <property type="evidence" value="ECO:0000315"/>
    <property type="project" value="MGI"/>
</dbReference>
<dbReference type="GO" id="GO:0007626">
    <property type="term" value="P:locomotory behavior"/>
    <property type="evidence" value="ECO:0000315"/>
    <property type="project" value="MGI"/>
</dbReference>
<dbReference type="GO" id="GO:0009791">
    <property type="term" value="P:post-embryonic development"/>
    <property type="evidence" value="ECO:0000315"/>
    <property type="project" value="MGI"/>
</dbReference>
<dbReference type="GO" id="GO:0040008">
    <property type="term" value="P:regulation of growth"/>
    <property type="evidence" value="ECO:0000315"/>
    <property type="project" value="MGI"/>
</dbReference>
<dbReference type="GO" id="GO:0010269">
    <property type="term" value="P:response to selenium ion"/>
    <property type="evidence" value="ECO:0007669"/>
    <property type="project" value="Ensembl"/>
</dbReference>
<dbReference type="GO" id="GO:0001887">
    <property type="term" value="P:selenium compound metabolic process"/>
    <property type="evidence" value="ECO:0000314"/>
    <property type="project" value="MGI"/>
</dbReference>
<dbReference type="GO" id="GO:0019953">
    <property type="term" value="P:sexual reproduction"/>
    <property type="evidence" value="ECO:0000315"/>
    <property type="project" value="MGI"/>
</dbReference>
<dbReference type="InterPro" id="IPR007671">
    <property type="entry name" value="Selenoprotein-P_N"/>
</dbReference>
<dbReference type="InterPro" id="IPR007672">
    <property type="entry name" value="SelP_C"/>
</dbReference>
<dbReference type="InterPro" id="IPR037941">
    <property type="entry name" value="SeP"/>
</dbReference>
<dbReference type="PANTHER" id="PTHR10105">
    <property type="entry name" value="SELENOPROTEIN P"/>
    <property type="match status" value="1"/>
</dbReference>
<dbReference type="PANTHER" id="PTHR10105:SF3">
    <property type="entry name" value="SELENOPROTEIN P"/>
    <property type="match status" value="1"/>
</dbReference>
<dbReference type="Pfam" id="PF04593">
    <property type="entry name" value="SelP_C"/>
    <property type="match status" value="1"/>
</dbReference>
<dbReference type="Pfam" id="PF04592">
    <property type="entry name" value="SelP_N"/>
    <property type="match status" value="1"/>
</dbReference>
<proteinExistence type="evidence at protein level"/>
<comment type="function">
    <text evidence="1">Might be responsible for some of the extracellular antioxidant defense properties of selenium or might be involved in the transport of selenium (By similarity). May supply selenium to tissues such as brain and testis.</text>
</comment>
<comment type="subcellular location">
    <subcellularLocation>
        <location evidence="5">Secreted</location>
    </subcellularLocation>
    <text evidence="5">Passes from plasma into the glomerular filtrate where it is removed by endocytosis mediated by LRP2 in the proximal tubule epithelium.</text>
</comment>
<comment type="tissue specificity">
    <text evidence="5 6">In the kidney, expressed in the cortex with no expression observed in the medulla (at protein level) (PubMed:18174160). Expressed by the liver and secreted in plasma (PubMed:9687017).</text>
</comment>
<comment type="domain">
    <text evidence="5">The C-terminus is not required for endocytic uptake in the proximal tubule epithelium.</text>
</comment>
<comment type="PTM">
    <text evidence="1">Phosphorylation sites are present in the extracellular medium.</text>
</comment>
<comment type="similarity">
    <text evidence="8">Belongs to the selenoprotein P family.</text>
</comment>
<gene>
    <name evidence="9" type="primary">Selenop</name>
    <name evidence="9" type="synonym">Selp</name>
    <name type="synonym">Sepp1</name>
</gene>